<protein>
    <recommendedName>
        <fullName evidence="5">Phosphoacetylglucosamine mutase</fullName>
        <shortName evidence="6">PAGM</shortName>
        <shortName evidence="5">PGlcNAc mutase</shortName>
        <ecNumber evidence="3 4">5.4.2.3</ecNumber>
    </recommendedName>
    <alternativeName>
        <fullName evidence="6">Acetylglucosamine phosphomutase</fullName>
    </alternativeName>
    <alternativeName>
        <fullName evidence="1">N-acetylglucosamine-phosphate mutase</fullName>
    </alternativeName>
    <alternativeName>
        <fullName evidence="1">Phosphoglucomutase-3</fullName>
        <shortName evidence="1">PGM 3</shortName>
    </alternativeName>
</protein>
<dbReference type="EC" id="5.4.2.3" evidence="3 4"/>
<dbReference type="EMBL" id="AEMK01179872">
    <property type="status" value="NOT_ANNOTATED_CDS"/>
    <property type="molecule type" value="Genomic_DNA"/>
</dbReference>
<dbReference type="EMBL" id="CU463150">
    <property type="status" value="NOT_ANNOTATED_CDS"/>
    <property type="molecule type" value="Genomic_DNA"/>
</dbReference>
<dbReference type="EMBL" id="GACC01000082">
    <property type="protein sequence ID" value="JAA53725.1"/>
    <property type="molecule type" value="mRNA"/>
</dbReference>
<dbReference type="RefSeq" id="XP_001924454.2">
    <property type="nucleotide sequence ID" value="XM_001924419.4"/>
</dbReference>
<dbReference type="RefSeq" id="XP_005659464.1">
    <property type="nucleotide sequence ID" value="XM_005659407.2"/>
</dbReference>
<dbReference type="SMR" id="F1RQM2"/>
<dbReference type="FunCoup" id="F1RQM2">
    <property type="interactions" value="1007"/>
</dbReference>
<dbReference type="STRING" id="9823.ENSSSCP00000062665"/>
<dbReference type="PaxDb" id="9823-ENSSSCP00000004806"/>
<dbReference type="PeptideAtlas" id="F1RQM2"/>
<dbReference type="Ensembl" id="ENSSSCT00030022007.1">
    <property type="protein sequence ID" value="ENSSSCP00030009944.1"/>
    <property type="gene ID" value="ENSSSCG00030015873.1"/>
</dbReference>
<dbReference type="Ensembl" id="ENSSSCT00035094807.1">
    <property type="protein sequence ID" value="ENSSSCP00035039836.1"/>
    <property type="gene ID" value="ENSSSCG00035070159.1"/>
</dbReference>
<dbReference type="Ensembl" id="ENSSSCT00045016316.1">
    <property type="protein sequence ID" value="ENSSSCP00045011275.1"/>
    <property type="gene ID" value="ENSSSCG00045009611.1"/>
</dbReference>
<dbReference type="Ensembl" id="ENSSSCT00050021173.1">
    <property type="protein sequence ID" value="ENSSSCP00050008843.1"/>
    <property type="gene ID" value="ENSSSCG00050015639.1"/>
</dbReference>
<dbReference type="Ensembl" id="ENSSSCT00055030841.1">
    <property type="protein sequence ID" value="ENSSSCP00055024560.1"/>
    <property type="gene ID" value="ENSSSCG00055015625.1"/>
</dbReference>
<dbReference type="Ensembl" id="ENSSSCT00065069324.1">
    <property type="protein sequence ID" value="ENSSSCP00065030198.1"/>
    <property type="gene ID" value="ENSSSCG00065050601.1"/>
</dbReference>
<dbReference type="Ensembl" id="ENSSSCT00070043212.1">
    <property type="protein sequence ID" value="ENSSSCP00070036361.1"/>
    <property type="gene ID" value="ENSSSCG00070021741.1"/>
</dbReference>
<dbReference type="Ensembl" id="ENSSSCT00090050498">
    <property type="protein sequence ID" value="ENSSSCP00090031468"/>
    <property type="gene ID" value="ENSSSCG00090028502"/>
</dbReference>
<dbReference type="Ensembl" id="ENSSSCT00105011872">
    <property type="protein sequence ID" value="ENSSSCP00105008799"/>
    <property type="gene ID" value="ENSSSCG00105005808"/>
</dbReference>
<dbReference type="Ensembl" id="ENSSSCT00110007236">
    <property type="protein sequence ID" value="ENSSSCP00110005214"/>
    <property type="gene ID" value="ENSSSCG00110003637"/>
</dbReference>
<dbReference type="Ensembl" id="ENSSSCT00115000697">
    <property type="protein sequence ID" value="ENSSSCP00115000636"/>
    <property type="gene ID" value="ENSSSCG00115000441"/>
</dbReference>
<dbReference type="Ensembl" id="ENSSSCT00130054843">
    <property type="protein sequence ID" value="ENSSSCP00130039299"/>
    <property type="gene ID" value="ENSSSCG00130028024"/>
</dbReference>
<dbReference type="GeneID" id="100156015"/>
<dbReference type="KEGG" id="ssc:100156015"/>
<dbReference type="CTD" id="5238"/>
<dbReference type="eggNOG" id="KOG2537">
    <property type="taxonomic scope" value="Eukaryota"/>
</dbReference>
<dbReference type="HOGENOM" id="CLU_022890_1_0_1"/>
<dbReference type="InParanoid" id="F1RQM2"/>
<dbReference type="OrthoDB" id="1928at2759"/>
<dbReference type="TreeFam" id="TF105670"/>
<dbReference type="Reactome" id="R-SSC-446210">
    <property type="pathway name" value="Synthesis of UDP-N-acetyl-glucosamine"/>
</dbReference>
<dbReference type="UniPathway" id="UPA00113">
    <property type="reaction ID" value="UER00530"/>
</dbReference>
<dbReference type="Proteomes" id="UP000008227">
    <property type="component" value="Unplaced"/>
</dbReference>
<dbReference type="Proteomes" id="UP000314985">
    <property type="component" value="Chromosome 1"/>
</dbReference>
<dbReference type="Proteomes" id="UP000694570">
    <property type="component" value="Unplaced"/>
</dbReference>
<dbReference type="Proteomes" id="UP000694571">
    <property type="component" value="Unplaced"/>
</dbReference>
<dbReference type="Proteomes" id="UP000694720">
    <property type="component" value="Unplaced"/>
</dbReference>
<dbReference type="Proteomes" id="UP000694722">
    <property type="component" value="Unplaced"/>
</dbReference>
<dbReference type="Proteomes" id="UP000694723">
    <property type="component" value="Unplaced"/>
</dbReference>
<dbReference type="Proteomes" id="UP000694724">
    <property type="component" value="Unplaced"/>
</dbReference>
<dbReference type="Proteomes" id="UP000694725">
    <property type="component" value="Unplaced"/>
</dbReference>
<dbReference type="Proteomes" id="UP000694726">
    <property type="component" value="Unplaced"/>
</dbReference>
<dbReference type="Proteomes" id="UP000694727">
    <property type="component" value="Unplaced"/>
</dbReference>
<dbReference type="Proteomes" id="UP000694728">
    <property type="component" value="Unplaced"/>
</dbReference>
<dbReference type="GO" id="GO:0000287">
    <property type="term" value="F:magnesium ion binding"/>
    <property type="evidence" value="ECO:0007669"/>
    <property type="project" value="InterPro"/>
</dbReference>
<dbReference type="GO" id="GO:0004610">
    <property type="term" value="F:phosphoacetylglucosamine mutase activity"/>
    <property type="evidence" value="ECO:0000318"/>
    <property type="project" value="GO_Central"/>
</dbReference>
<dbReference type="GO" id="GO:0005975">
    <property type="term" value="P:carbohydrate metabolic process"/>
    <property type="evidence" value="ECO:0007669"/>
    <property type="project" value="InterPro"/>
</dbReference>
<dbReference type="GO" id="GO:0030097">
    <property type="term" value="P:hemopoiesis"/>
    <property type="evidence" value="ECO:0000318"/>
    <property type="project" value="GO_Central"/>
</dbReference>
<dbReference type="GO" id="GO:0006048">
    <property type="term" value="P:UDP-N-acetylglucosamine biosynthetic process"/>
    <property type="evidence" value="ECO:0000318"/>
    <property type="project" value="GO_Central"/>
</dbReference>
<dbReference type="CDD" id="cd03086">
    <property type="entry name" value="PGM3"/>
    <property type="match status" value="1"/>
</dbReference>
<dbReference type="FunFam" id="3.30.310.50:FF:000003">
    <property type="entry name" value="Phosphoacetylglucosamine mutase"/>
    <property type="match status" value="1"/>
</dbReference>
<dbReference type="FunFam" id="3.40.120.10:FF:000013">
    <property type="entry name" value="Phosphoacetylglucosamine mutase"/>
    <property type="match status" value="1"/>
</dbReference>
<dbReference type="FunFam" id="3.40.120.10:FF:000015">
    <property type="entry name" value="Phosphoacetylglucosamine mutase"/>
    <property type="match status" value="1"/>
</dbReference>
<dbReference type="FunFam" id="3.40.120.10:FF:000019">
    <property type="entry name" value="Phosphoacetylglucosamine mutase"/>
    <property type="match status" value="1"/>
</dbReference>
<dbReference type="Gene3D" id="3.40.120.10">
    <property type="entry name" value="Alpha-D-Glucose-1,6-Bisphosphate, subunit A, domain 3"/>
    <property type="match status" value="3"/>
</dbReference>
<dbReference type="Gene3D" id="3.30.310.50">
    <property type="entry name" value="Alpha-D-phosphohexomutase, C-terminal domain"/>
    <property type="match status" value="1"/>
</dbReference>
<dbReference type="InterPro" id="IPR005844">
    <property type="entry name" value="A-D-PHexomutase_a/b/a-I"/>
</dbReference>
<dbReference type="InterPro" id="IPR016055">
    <property type="entry name" value="A-D-PHexomutase_a/b/a-I/II/III"/>
</dbReference>
<dbReference type="InterPro" id="IPR005843">
    <property type="entry name" value="A-D-PHexomutase_C"/>
</dbReference>
<dbReference type="InterPro" id="IPR036900">
    <property type="entry name" value="A-D-PHexomutase_C_sf"/>
</dbReference>
<dbReference type="InterPro" id="IPR016066">
    <property type="entry name" value="A-D-PHexomutase_CS"/>
</dbReference>
<dbReference type="InterPro" id="IPR049023">
    <property type="entry name" value="AMG1_II"/>
</dbReference>
<dbReference type="InterPro" id="IPR049022">
    <property type="entry name" value="AMG1_III"/>
</dbReference>
<dbReference type="InterPro" id="IPR016657">
    <property type="entry name" value="PAGM"/>
</dbReference>
<dbReference type="PANTHER" id="PTHR45955">
    <property type="entry name" value="PHOSPHOACETYLGLUCOSAMINE MUTASE"/>
    <property type="match status" value="1"/>
</dbReference>
<dbReference type="PANTHER" id="PTHR45955:SF1">
    <property type="entry name" value="PHOSPHOACETYLGLUCOSAMINE MUTASE"/>
    <property type="match status" value="1"/>
</dbReference>
<dbReference type="Pfam" id="PF21405">
    <property type="entry name" value="AMG1_II"/>
    <property type="match status" value="1"/>
</dbReference>
<dbReference type="Pfam" id="PF21404">
    <property type="entry name" value="AMG1_III"/>
    <property type="match status" value="1"/>
</dbReference>
<dbReference type="Pfam" id="PF02878">
    <property type="entry name" value="PGM_PMM_I"/>
    <property type="match status" value="2"/>
</dbReference>
<dbReference type="Pfam" id="PF00408">
    <property type="entry name" value="PGM_PMM_IV"/>
    <property type="match status" value="1"/>
</dbReference>
<dbReference type="PIRSF" id="PIRSF016408">
    <property type="entry name" value="PAGM"/>
    <property type="match status" value="1"/>
</dbReference>
<dbReference type="SUPFAM" id="SSF55957">
    <property type="entry name" value="Phosphoglucomutase, C-terminal domain"/>
    <property type="match status" value="1"/>
</dbReference>
<dbReference type="SUPFAM" id="SSF53738">
    <property type="entry name" value="Phosphoglucomutase, first 3 domains"/>
    <property type="match status" value="4"/>
</dbReference>
<dbReference type="PROSITE" id="PS00710">
    <property type="entry name" value="PGM_PMM"/>
    <property type="match status" value="1"/>
</dbReference>
<sequence length="542" mass="59474">MDLDAITKHSASHAKPDGLILQYGTAGFRTKADRLDHVMFRMGLLAVLRSKQTKSTIGVMVTASHNPEDDNGVKLVDPLGEMLAPSWEEHATHLANAEEQDLARALVAISEEAAVNLHQDAFVVIGRDTRPSSEKLSESVIDGVTVLGGQFHDYGLLTTPQLHYMVCCRNTGGQYGEATIDGYYHKLSTAFVELSKQASCSGDDHRTLKVDCANGIGALKLKEMKHYLPQGLSVQLFNDGTKGKLNHFCGADFVKSHQKPPEGIEMKANERCCSFDGDADRIIYYYCDVDGHFHLIDGDKIATLISSFLKELLLEIGESLTVGVVQTAYANGSSTRYLEEVMKVPVYCTKTGVKHLHHKAQEFDLGVYFEANGHGTVLFSKAAEAKIRQLAKELEDKKGKAAKMLENVIDLFNQATGDAISDMLVIEAILALKGLTIQQWDALYTDLPNRQLKVKVADRQVISTTDAERQVVKPPGLQEAINDLVKKYKLSRAFVRPSGTEDVVRVYAEADSQENADSLAYEVSLAVFQQAGGVGERPQPGF</sequence>
<proteinExistence type="evidence at protein level"/>
<feature type="chain" id="PRO_0000431296" description="Phosphoacetylglucosamine mutase">
    <location>
        <begin position="1"/>
        <end position="542"/>
    </location>
</feature>
<feature type="active site" description="Phosphoserine intermediate" evidence="2">
    <location>
        <position position="64"/>
    </location>
</feature>
<feature type="binding site" description="via phosphate group" evidence="2">
    <location>
        <position position="64"/>
    </location>
    <ligand>
        <name>Mg(2+)</name>
        <dbReference type="ChEBI" id="CHEBI:18420"/>
    </ligand>
</feature>
<feature type="binding site" evidence="2">
    <location>
        <position position="276"/>
    </location>
    <ligand>
        <name>Mg(2+)</name>
        <dbReference type="ChEBI" id="CHEBI:18420"/>
    </ligand>
</feature>
<feature type="binding site" evidence="2">
    <location>
        <position position="278"/>
    </location>
    <ligand>
        <name>Mg(2+)</name>
        <dbReference type="ChEBI" id="CHEBI:18420"/>
    </ligand>
</feature>
<feature type="binding site" evidence="2">
    <location>
        <position position="280"/>
    </location>
    <ligand>
        <name>Mg(2+)</name>
        <dbReference type="ChEBI" id="CHEBI:18420"/>
    </ligand>
</feature>
<feature type="binding site" evidence="2">
    <location>
        <begin position="370"/>
        <end position="372"/>
    </location>
    <ligand>
        <name>substrate</name>
    </ligand>
</feature>
<feature type="binding site" evidence="2">
    <location>
        <begin position="496"/>
        <end position="500"/>
    </location>
    <ligand>
        <name>substrate</name>
    </ligand>
</feature>
<feature type="binding site" evidence="2">
    <location>
        <position position="505"/>
    </location>
    <ligand>
        <name>substrate</name>
    </ligand>
</feature>
<feature type="modified residue" description="N-acetylmethionine" evidence="1">
    <location>
        <position position="1"/>
    </location>
</feature>
<feature type="modified residue" description="Phosphothreonine" evidence="1">
    <location>
        <position position="62"/>
    </location>
</feature>
<feature type="modified residue" description="Phosphoserine" evidence="1">
    <location>
        <position position="64"/>
    </location>
</feature>
<name>AGM1_PIG</name>
<reference key="1">
    <citation type="submission" date="2009-11" db="EMBL/GenBank/DDBJ databases">
        <authorList>
            <consortium name="Porcine genome sequencing project"/>
        </authorList>
    </citation>
    <scope>NUCLEOTIDE SEQUENCE [LARGE SCALE GENOMIC DNA]</scope>
</reference>
<reference key="2">
    <citation type="submission" date="2013-02" db="EMBL/GenBank/DDBJ databases">
        <title>Global gene expression profiling of alveolar macrophages by deep sequencing.</title>
        <authorList>
            <person name="Dawson H.D."/>
            <person name="Chen C.T."/>
        </authorList>
    </citation>
    <scope>NUCLEOTIDE SEQUENCE [LARGE SCALE MRNA]</scope>
</reference>
<reference key="3">
    <citation type="journal article" date="1971" name="J. Biol. Chem.">
        <title>Purification and properties of phosphoacetylglucosamine mutase.</title>
        <authorList>
            <person name="Fernandez-Sorensen A."/>
            <person name="Carlson D.M."/>
        </authorList>
    </citation>
    <scope>FUNCTION</scope>
    <scope>CATALYTIC ACTIVITY</scope>
    <scope>BIOPHYSICOCHEMICAL PROPERTIES</scope>
    <scope>COFACTOR</scope>
    <scope>ACTIVITY REGULATION</scope>
</reference>
<reference key="4">
    <citation type="journal article" date="1979" name="J. Biol. Chem.">
        <title>Mechanism of phosphoacetylglucosamine mutase.</title>
        <authorList>
            <person name="Cheng P.W."/>
            <person name="Carlson D.M."/>
        </authorList>
    </citation>
    <scope>FUNCTION</scope>
    <scope>CATALYTIC ACTIVITY</scope>
    <scope>PATHWAY</scope>
</reference>
<evidence type="ECO:0000250" key="1">
    <source>
        <dbReference type="UniProtKB" id="O95394"/>
    </source>
</evidence>
<evidence type="ECO:0000250" key="2">
    <source>
        <dbReference type="UniProtKB" id="Q9P4V2"/>
    </source>
</evidence>
<evidence type="ECO:0000269" key="3">
    <source>
    </source>
</evidence>
<evidence type="ECO:0000269" key="4">
    <source>
    </source>
</evidence>
<evidence type="ECO:0000303" key="5">
    <source>
    </source>
</evidence>
<evidence type="ECO:0000305" key="6"/>
<evidence type="ECO:0000305" key="7">
    <source>
    </source>
</evidence>
<keyword id="KW-0007">Acetylation</keyword>
<keyword id="KW-0119">Carbohydrate metabolism</keyword>
<keyword id="KW-0413">Isomerase</keyword>
<keyword id="KW-0460">Magnesium</keyword>
<keyword id="KW-0479">Metal-binding</keyword>
<keyword id="KW-0597">Phosphoprotein</keyword>
<keyword id="KW-1185">Reference proteome</keyword>
<organism>
    <name type="scientific">Sus scrofa</name>
    <name type="common">Pig</name>
    <dbReference type="NCBI Taxonomy" id="9823"/>
    <lineage>
        <taxon>Eukaryota</taxon>
        <taxon>Metazoa</taxon>
        <taxon>Chordata</taxon>
        <taxon>Craniata</taxon>
        <taxon>Vertebrata</taxon>
        <taxon>Euteleostomi</taxon>
        <taxon>Mammalia</taxon>
        <taxon>Eutheria</taxon>
        <taxon>Laurasiatheria</taxon>
        <taxon>Artiodactyla</taxon>
        <taxon>Suina</taxon>
        <taxon>Suidae</taxon>
        <taxon>Sus</taxon>
    </lineage>
</organism>
<accession>F1RQM2</accession>
<gene>
    <name evidence="1" type="primary">PGM3</name>
    <name evidence="1" type="synonym">AGM1</name>
</gene>
<comment type="function">
    <text evidence="3 4">Catalyzes the conversion of GlcNAc-6-P into GlcNAc-1-P during the synthesis of uridine diphosphate/UDP-GlcNAc, a sugar nucleotide critical to multiple glycosylation pathways including protein N- and O-glycosylation.</text>
</comment>
<comment type="catalytic activity">
    <reaction evidence="3 4">
        <text>N-acetyl-alpha-D-glucosamine 1-phosphate = N-acetyl-D-glucosamine 6-phosphate</text>
        <dbReference type="Rhea" id="RHEA:23804"/>
        <dbReference type="ChEBI" id="CHEBI:57513"/>
        <dbReference type="ChEBI" id="CHEBI:57776"/>
        <dbReference type="EC" id="5.4.2.3"/>
    </reaction>
</comment>
<comment type="cofactor">
    <cofactor evidence="4">
        <name>Mg(2+)</name>
        <dbReference type="ChEBI" id="CHEBI:18420"/>
    </cofactor>
    <text evidence="4">Binds 1 Mg(2+) ion per subunit.</text>
</comment>
<comment type="activity regulation">
    <text evidence="4">Inhibited by Mn(2+), Cd(2+), Zn(2+), Cu(2+) and Be(2+).</text>
</comment>
<comment type="biophysicochemical properties">
    <kinetics>
        <KM evidence="4">0.29 mM for D-glucosamine 1-phosphate</KM>
        <KM evidence="4">0.39 mM for D-glucose 1-phosphate</KM>
        <KM evidence="4">0.018 mM for fructose 1,6-diphosphate</KM>
        <KM evidence="4">0.016 mM for galactose 1,6-diphosphate</KM>
        <KM evidence="4">0.005 mM for mannose 1,6-diphosphate</KM>
        <KM evidence="4">0.002 mM for glucose 1,6-diphosphate</KM>
        <Vmax evidence="4">39.4 umol/min/mg enzyme for D-glucosamine 1-phosphate</Vmax>
        <Vmax evidence="4">28.9 umol/min/mg enzyme for D-glucose 1-phosphate</Vmax>
        <Vmax evidence="4">10.1 umol/min/mg enzyme for fructose 1,6-diphosphate</Vmax>
        <Vmax evidence="4">14.3 umol/min/mg enzyme for galactose 1,6-diphosphate</Vmax>
        <Vmax evidence="4">26.7 umol/min/mg enzyme for mannose 1,6-diphosphate</Vmax>
        <Vmax evidence="4">34.4 umol/min/mg enzyme for glucose 1,6-diphosphate</Vmax>
    </kinetics>
    <phDependence>
        <text evidence="4">Optimum pH is 7-7.5.</text>
    </phDependence>
</comment>
<comment type="pathway">
    <text evidence="7">Nucleotide-sugar biosynthesis; UDP-N-acetyl-alpha-D-glucosamine biosynthesis; N-acetyl-alpha-D-glucosamine 1-phosphate from alpha-D-glucosamine 6-phosphate (route I): step 2/2.</text>
</comment>
<comment type="similarity">
    <text evidence="6">Belongs to the phosphohexose mutase family.</text>
</comment>